<sequence length="144" mass="15976">MNFKYIVAVSFLLASAYARSEENDEQSLSQRDVLEEESLREIRGIGTKILGGVKTALKGALKELASTYANGKRTAEEHEVMKRLEAVMRDLDSLDYPEEAAERETRSFNQEEIANLFTKKEKRILGPVISTIGGVLGGLLKNLG</sequence>
<feature type="signal peptide" evidence="1">
    <location>
        <begin position="1"/>
        <end position="18"/>
    </location>
</feature>
<feature type="propeptide" id="PRO_0000003080" evidence="1 5">
    <location>
        <begin position="19"/>
        <end position="43"/>
    </location>
</feature>
<feature type="peptide" id="PRO_0000003081" description="Maximin-1" evidence="5">
    <location>
        <begin position="44"/>
        <end position="70"/>
    </location>
</feature>
<feature type="propeptide" id="PRO_0000003082" evidence="2">
    <location>
        <begin position="74"/>
        <end position="123"/>
    </location>
</feature>
<feature type="peptide" id="PRO_0000003083" description="Maximin-H1">
    <location>
        <begin position="124"/>
        <end position="143"/>
    </location>
</feature>
<feature type="site" description="Important for flexibility" evidence="8">
    <location>
        <position position="59"/>
    </location>
</feature>
<feature type="modified residue" description="Asparagine amide" evidence="2 3">
    <location>
        <position position="70"/>
    </location>
</feature>
<feature type="modified residue" description="Leucine amide" evidence="2 3">
    <location>
        <position position="143"/>
    </location>
</feature>
<feature type="sequence conflict" description="In Ref. 2; AAX50193." evidence="7" ref="2">
    <original>T</original>
    <variation>S</variation>
    <location>
        <position position="105"/>
    </location>
</feature>
<feature type="helix" evidence="11">
    <location>
        <begin position="46"/>
        <end position="48"/>
    </location>
</feature>
<feature type="turn" evidence="11">
    <location>
        <begin position="49"/>
        <end position="52"/>
    </location>
</feature>
<feature type="helix" evidence="11">
    <location>
        <begin position="53"/>
        <end position="58"/>
    </location>
</feature>
<feature type="helix" evidence="11">
    <location>
        <begin position="60"/>
        <end position="69"/>
    </location>
</feature>
<organism>
    <name type="scientific">Bombina maxima</name>
    <name type="common">Giant fire-bellied toad</name>
    <name type="synonym">Chinese red belly toad</name>
    <dbReference type="NCBI Taxonomy" id="161274"/>
    <lineage>
        <taxon>Eukaryota</taxon>
        <taxon>Metazoa</taxon>
        <taxon>Chordata</taxon>
        <taxon>Craniata</taxon>
        <taxon>Vertebrata</taxon>
        <taxon>Euteleostomi</taxon>
        <taxon>Amphibia</taxon>
        <taxon>Batrachia</taxon>
        <taxon>Anura</taxon>
        <taxon>Bombinatoridae</taxon>
        <taxon>Bombina</taxon>
    </lineage>
</organism>
<accession>P83080</accession>
<accession>P83085</accession>
<accession>Q58T88</accession>
<evidence type="ECO:0000255" key="1"/>
<evidence type="ECO:0000269" key="2">
    <source>
    </source>
</evidence>
<evidence type="ECO:0000269" key="3">
    <source>
    </source>
</evidence>
<evidence type="ECO:0000269" key="4">
    <source>
    </source>
</evidence>
<evidence type="ECO:0000269" key="5">
    <source ref="3"/>
</evidence>
<evidence type="ECO:0000303" key="6">
    <source>
    </source>
</evidence>
<evidence type="ECO:0000305" key="7"/>
<evidence type="ECO:0000305" key="8">
    <source>
    </source>
</evidence>
<evidence type="ECO:0000312" key="9">
    <source>
        <dbReference type="EMBL" id="AAK63254.1"/>
    </source>
</evidence>
<evidence type="ECO:0000312" key="10">
    <source>
        <dbReference type="PDB" id="7OVZ"/>
    </source>
</evidence>
<evidence type="ECO:0007829" key="11">
    <source>
        <dbReference type="PDB" id="7OVZ"/>
    </source>
</evidence>
<dbReference type="EMBL" id="AF378904">
    <property type="protein sequence ID" value="AAK63254.1"/>
    <property type="molecule type" value="mRNA"/>
</dbReference>
<dbReference type="EMBL" id="AY848972">
    <property type="protein sequence ID" value="AAX50193.1"/>
    <property type="molecule type" value="mRNA"/>
</dbReference>
<dbReference type="PDB" id="7OVZ">
    <property type="method" value="NMR"/>
    <property type="chains" value="M=44-70"/>
</dbReference>
<dbReference type="PDBsum" id="7OVZ"/>
<dbReference type="SMR" id="P83080"/>
<dbReference type="GO" id="GO:0005576">
    <property type="term" value="C:extracellular region"/>
    <property type="evidence" value="ECO:0007669"/>
    <property type="project" value="UniProtKB-SubCell"/>
</dbReference>
<dbReference type="GO" id="GO:0090729">
    <property type="term" value="F:toxin activity"/>
    <property type="evidence" value="ECO:0007669"/>
    <property type="project" value="UniProtKB-KW"/>
</dbReference>
<dbReference type="GO" id="GO:0042742">
    <property type="term" value="P:defense response to bacterium"/>
    <property type="evidence" value="ECO:0007669"/>
    <property type="project" value="UniProtKB-KW"/>
</dbReference>
<dbReference type="GO" id="GO:0050832">
    <property type="term" value="P:defense response to fungus"/>
    <property type="evidence" value="ECO:0007669"/>
    <property type="project" value="UniProtKB-KW"/>
</dbReference>
<dbReference type="GO" id="GO:0031640">
    <property type="term" value="P:killing of cells of another organism"/>
    <property type="evidence" value="ECO:0007669"/>
    <property type="project" value="UniProtKB-KW"/>
</dbReference>
<dbReference type="InterPro" id="IPR007962">
    <property type="entry name" value="Bombinin"/>
</dbReference>
<dbReference type="Pfam" id="PF05298">
    <property type="entry name" value="Bombinin"/>
    <property type="match status" value="1"/>
</dbReference>
<reference evidence="9" key="1">
    <citation type="journal article" date="2002" name="Peptides">
        <title>Antimicrobial peptides from skin secretions of Chinese red belly toad Bombina maxima.</title>
        <authorList>
            <person name="Lai R."/>
            <person name="Zheng Y.-T."/>
            <person name="Shen J.-H."/>
            <person name="Liu G.-J."/>
            <person name="Liu H."/>
            <person name="Lee W.-H."/>
            <person name="Tang S.-Z."/>
            <person name="Zhang Y."/>
        </authorList>
    </citation>
    <scope>NUCLEOTIDE SEQUENCE [MRNA]</scope>
    <scope>PROTEIN SEQUENCE OF 44-70 AND 124-143</scope>
    <scope>AMIDATION AT ASN-70 AND LEU-143</scope>
    <scope>FUNCTION OF MAXIMIN-1 AND MAXIMIN-H1</scope>
    <scope>MASS SPECTROMETRY</scope>
    <scope>TOXIC DOSE</scope>
    <source>
        <tissue>Skin</tissue>
        <tissue>Skin secretion</tissue>
    </source>
</reference>
<reference key="2">
    <citation type="journal article" date="2005" name="Eur. J. Immunol.">
        <title>Variety of antimicrobial peptides in the Bombina maxima toad and evidence of their rapid diversification.</title>
        <authorList>
            <person name="Lee W.-H."/>
            <person name="Li Y."/>
            <person name="Lai R."/>
            <person name="Li S."/>
            <person name="Zhang Y."/>
            <person name="Wang W."/>
        </authorList>
    </citation>
    <scope>NUCLEOTIDE SEQUENCE [MRNA]</scope>
    <scope>AMIDATION AT ASN-70 AND LEU-143</scope>
    <source>
        <tissue>Skin</tissue>
    </source>
</reference>
<reference evidence="7" key="3">
    <citation type="submission" date="2001-07" db="UniProtKB">
        <title>Isolation and structural characterisation of antimicrobial peptides from the venom of the Chinese large-webbed bell toad (Bombina maxima).</title>
        <authorList>
            <person name="Chen T.B."/>
            <person name="McClean S."/>
            <person name="Orr D.F."/>
            <person name="Bjourson A.J."/>
            <person name="Rao P.F."/>
            <person name="Shaw C."/>
        </authorList>
    </citation>
    <scope>PROTEIN SEQUENCE OF 44-70</scope>
    <scope>FUNCTION OF MAXIMIN-1 AND MAXIMIN-H1</scope>
    <scope>SUBCELLULAR LOCATION</scope>
    <scope>TISSUE SPECIFICITY</scope>
    <source>
        <tissue>Skin secretion</tissue>
    </source>
</reference>
<reference evidence="10" key="4">
    <citation type="journal article" date="2022" name="J. Pept. Sci.">
        <title>Biophysical study of the structure and dynamics of the antimicrobial peptide maximin 1.</title>
        <authorList>
            <person name="Timmons P.B."/>
            <person name="Hewage C.M."/>
        </authorList>
    </citation>
    <scope>STRUCTURE BY NMR OF 44-70</scope>
    <scope>MOLECULAR DYNAMICS SIMULATIONS</scope>
</reference>
<keyword id="KW-0002">3D-structure</keyword>
<keyword id="KW-0027">Amidation</keyword>
<keyword id="KW-0878">Amphibian defense peptide</keyword>
<keyword id="KW-0044">Antibiotic</keyword>
<keyword id="KW-0929">Antimicrobial</keyword>
<keyword id="KW-0165">Cleavage on pair of basic residues</keyword>
<keyword id="KW-0204">Cytolysis</keyword>
<keyword id="KW-0903">Direct protein sequencing</keyword>
<keyword id="KW-0295">Fungicide</keyword>
<keyword id="KW-0964">Secreted</keyword>
<keyword id="KW-0732">Signal</keyword>
<keyword id="KW-0800">Toxin</keyword>
<proteinExistence type="evidence at protein level"/>
<comment type="function">
    <molecule>Maximin-1</molecule>
    <text evidence="4 5">Antibacterial peptide with amphipathic alpha-helical structure that has activity against both Gram-positive and Gram-negative bacteria (PubMed:34569121, Ref.3). Also shows antimicrobial activity against the fungus C.albicans, but not against A.flavus nor P.uticale (Ref.3). It has little hemolytic activity (Ref.3). It possess a significant cytotoxicity against tumor cell lines, but does not possess a significant anti-HIV activity (Ref.3). Also shows high spermicidal activity (Ref.3).</text>
</comment>
<comment type="function">
    <molecule>Maximin-H1</molecule>
    <text evidence="5">antibacterial peptide with activity against both Gram-positive and Gram-negative bacteria. Also shows antimicrobial activity against the fungus C.albicans. In addition, shows strong hemolytic activity.</text>
</comment>
<comment type="subcellular location">
    <subcellularLocation>
        <location evidence="5">Secreted</location>
    </subcellularLocation>
</comment>
<comment type="tissue specificity">
    <text evidence="5">Expressed by the skin glands.</text>
</comment>
<comment type="mass spectrometry" mass="2674.0" method="FAB" evidence="2">
    <molecule>Maximin-1</molecule>
</comment>
<comment type="mass spectrometry" mass="1933.0" method="FAB" evidence="2">
    <molecule>Maximin-H1</molecule>
</comment>
<comment type="toxic dose">
    <text evidence="2">LD(50) is 8.2 mg/kg by intraperitoneal injection into mice.</text>
</comment>
<comment type="similarity">
    <text evidence="1">Belongs to the bombinin family.</text>
</comment>
<name>M1H1_BOMMX</name>
<protein>
    <recommendedName>
        <fullName>Maximins 1/H1</fullName>
    </recommendedName>
    <component>
        <recommendedName>
            <fullName>Maximin-1</fullName>
        </recommendedName>
        <alternativeName>
            <fullName evidence="6">Host defense peptide</fullName>
            <shortName evidence="6">HDP</shortName>
        </alternativeName>
    </component>
    <component>
        <recommendedName>
            <fullName>Maximin-H1</fullName>
        </recommendedName>
        <alternativeName>
            <fullName>Maximin-6</fullName>
        </alternativeName>
    </component>
</protein>